<organism>
    <name type="scientific">Salmonella typhimurium (strain LT2 / SGSC1412 / ATCC 700720)</name>
    <dbReference type="NCBI Taxonomy" id="99287"/>
    <lineage>
        <taxon>Bacteria</taxon>
        <taxon>Pseudomonadati</taxon>
        <taxon>Pseudomonadota</taxon>
        <taxon>Gammaproteobacteria</taxon>
        <taxon>Enterobacterales</taxon>
        <taxon>Enterobacteriaceae</taxon>
        <taxon>Salmonella</taxon>
    </lineage>
</organism>
<comment type="function">
    <text>Catalyzes the decarboxylation of oxaloacetate coupled to Na(+) translocation.</text>
</comment>
<comment type="catalytic activity">
    <reaction>
        <text>oxaloacetate + 2 Na(+)(in) + H(+) = pyruvate + 2 Na(+)(out) + CO2</text>
        <dbReference type="Rhea" id="RHEA:57724"/>
        <dbReference type="ChEBI" id="CHEBI:15361"/>
        <dbReference type="ChEBI" id="CHEBI:15378"/>
        <dbReference type="ChEBI" id="CHEBI:16452"/>
        <dbReference type="ChEBI" id="CHEBI:16526"/>
        <dbReference type="ChEBI" id="CHEBI:29101"/>
        <dbReference type="EC" id="7.2.4.2"/>
    </reaction>
</comment>
<comment type="cofactor">
    <cofactor>
        <name>Na(+)</name>
        <dbReference type="ChEBI" id="CHEBI:29101"/>
    </cofactor>
</comment>
<comment type="subunit">
    <text>Heterotrimer of an alpha, a beta and a gamma subunit.</text>
</comment>
<comment type="subcellular location">
    <subcellularLocation>
        <location>Cell membrane</location>
        <topology>Single-pass membrane protein</topology>
    </subcellularLocation>
</comment>
<comment type="similarity">
    <text evidence="2">Belongs to the OadG family.</text>
</comment>
<proteinExistence type="evidence at protein level"/>
<keyword id="KW-0002">3D-structure</keyword>
<keyword id="KW-1003">Cell membrane</keyword>
<keyword id="KW-0406">Ion transport</keyword>
<keyword id="KW-0472">Membrane</keyword>
<keyword id="KW-1185">Reference proteome</keyword>
<keyword id="KW-0915">Sodium</keyword>
<keyword id="KW-0739">Sodium transport</keyword>
<keyword id="KW-1278">Translocase</keyword>
<keyword id="KW-0812">Transmembrane</keyword>
<keyword id="KW-1133">Transmembrane helix</keyword>
<keyword id="KW-0813">Transport</keyword>
<protein>
    <recommendedName>
        <fullName>Oxaloacetate decarboxylase gamma chain 2</fullName>
        <ecNumber>7.2.4.2</ecNumber>
    </recommendedName>
</protein>
<reference key="1">
    <citation type="journal article" date="1992" name="J. Biol. Chem.">
        <title>Sequence of the sodium ion pump oxaloacetate decarboxylase from Salmonella typhimurium.</title>
        <authorList>
            <person name="Woehlke G."/>
            <person name="Wifling K."/>
            <person name="Dimroth P."/>
        </authorList>
    </citation>
    <scope>NUCLEOTIDE SEQUENCE [GENOMIC DNA]</scope>
    <source>
        <strain>LT2</strain>
    </source>
</reference>
<reference key="2">
    <citation type="journal article" date="2001" name="Nature">
        <title>Complete genome sequence of Salmonella enterica serovar Typhimurium LT2.</title>
        <authorList>
            <person name="McClelland M."/>
            <person name="Sanderson K.E."/>
            <person name="Spieth J."/>
            <person name="Clifton S.W."/>
            <person name="Latreille P."/>
            <person name="Courtney L."/>
            <person name="Porwollik S."/>
            <person name="Ali J."/>
            <person name="Dante M."/>
            <person name="Du F."/>
            <person name="Hou S."/>
            <person name="Layman D."/>
            <person name="Leonard S."/>
            <person name="Nguyen C."/>
            <person name="Scott K."/>
            <person name="Holmes A."/>
            <person name="Grewal N."/>
            <person name="Mulvaney E."/>
            <person name="Ryan E."/>
            <person name="Sun H."/>
            <person name="Florea L."/>
            <person name="Miller W."/>
            <person name="Stoneking T."/>
            <person name="Nhan M."/>
            <person name="Waterston R."/>
            <person name="Wilson R.K."/>
        </authorList>
    </citation>
    <scope>NUCLEOTIDE SEQUENCE [LARGE SCALE GENOMIC DNA]</scope>
    <source>
        <strain>LT2 / SGSC1412 / ATCC 700720</strain>
    </source>
</reference>
<gene>
    <name type="primary">oadG2</name>
    <name type="synonym">oadG</name>
    <name type="ordered locus">STM3353</name>
</gene>
<accession>Q03032</accession>
<name>OADG2_SALTY</name>
<feature type="chain" id="PRO_0000216458" description="Oxaloacetate decarboxylase gamma chain 2">
    <location>
        <begin position="1"/>
        <end position="84"/>
    </location>
</feature>
<feature type="transmembrane region" description="Helical" evidence="1">
    <location>
        <begin position="13"/>
        <end position="33"/>
    </location>
</feature>
<feature type="sequence conflict" description="In Ref. 1; AAA02972." evidence="2" ref="1">
    <original>KA</original>
    <variation>N</variation>
    <location>
        <begin position="52"/>
        <end position="53"/>
    </location>
</feature>
<evidence type="ECO:0000250" key="1"/>
<evidence type="ECO:0000305" key="2"/>
<sequence>MTNAALLLGEGFTLMFLGMGFVLAFLFLLIFAIRGMSAAVNRFFPEPAPAPKAAPAAAAPVVDDFTRLKPVIAAAIHHHHRLNA</sequence>
<dbReference type="EC" id="7.2.4.2"/>
<dbReference type="EMBL" id="M96434">
    <property type="protein sequence ID" value="AAA02972.1"/>
    <property type="molecule type" value="Unassigned_DNA"/>
</dbReference>
<dbReference type="EMBL" id="AE006468">
    <property type="protein sequence ID" value="AAL22222.1"/>
    <property type="molecule type" value="Genomic_DNA"/>
</dbReference>
<dbReference type="PIR" id="A44465">
    <property type="entry name" value="A44465"/>
</dbReference>
<dbReference type="RefSeq" id="NP_462263.1">
    <property type="nucleotide sequence ID" value="NC_003197.2"/>
</dbReference>
<dbReference type="RefSeq" id="WP_000180114.1">
    <property type="nucleotide sequence ID" value="NC_003197.2"/>
</dbReference>
<dbReference type="PDB" id="6IVA">
    <property type="method" value="X-ray"/>
    <property type="resolution" value="4.40 A"/>
    <property type="chains" value="B/D/F=1-84"/>
</dbReference>
<dbReference type="PDB" id="6IWW">
    <property type="method" value="EM"/>
    <property type="resolution" value="3.90 A"/>
    <property type="chains" value="B/D/F=1-84"/>
</dbReference>
<dbReference type="PDBsum" id="6IVA"/>
<dbReference type="PDBsum" id="6IWW"/>
<dbReference type="SMR" id="Q03032"/>
<dbReference type="STRING" id="99287.STM3353"/>
<dbReference type="TCDB" id="3.B.1.1.1">
    <property type="family name" value="the na(+)-transporting carboxylic acid decarboxylase (nat-dc) family"/>
</dbReference>
<dbReference type="PaxDb" id="99287-STM3353"/>
<dbReference type="GeneID" id="1254876"/>
<dbReference type="KEGG" id="stm:STM3353"/>
<dbReference type="PATRIC" id="fig|99287.12.peg.3554"/>
<dbReference type="HOGENOM" id="CLU_168750_3_2_6"/>
<dbReference type="OMA" id="FRITMSQ"/>
<dbReference type="PhylomeDB" id="Q03032"/>
<dbReference type="BioCyc" id="SENT99287:STM3353-MONOMER"/>
<dbReference type="Proteomes" id="UP000001014">
    <property type="component" value="Chromosome"/>
</dbReference>
<dbReference type="GO" id="GO:0005886">
    <property type="term" value="C:plasma membrane"/>
    <property type="evidence" value="ECO:0007669"/>
    <property type="project" value="UniProtKB-SubCell"/>
</dbReference>
<dbReference type="GO" id="GO:0015451">
    <property type="term" value="F:decarboxylation-driven active transmembrane transporter activity"/>
    <property type="evidence" value="ECO:0007669"/>
    <property type="project" value="UniProtKB-EC"/>
</dbReference>
<dbReference type="GO" id="GO:0008948">
    <property type="term" value="F:oxaloacetate decarboxylase activity"/>
    <property type="evidence" value="ECO:0007669"/>
    <property type="project" value="UniProtKB-UniRule"/>
</dbReference>
<dbReference type="GO" id="GO:0015081">
    <property type="term" value="F:sodium ion transmembrane transporter activity"/>
    <property type="evidence" value="ECO:0007669"/>
    <property type="project" value="UniProtKB-UniRule"/>
</dbReference>
<dbReference type="GO" id="GO:0036376">
    <property type="term" value="P:sodium ion export across plasma membrane"/>
    <property type="evidence" value="ECO:0007669"/>
    <property type="project" value="InterPro"/>
</dbReference>
<dbReference type="HAMAP" id="MF_00404">
    <property type="entry name" value="OadG"/>
    <property type="match status" value="1"/>
</dbReference>
<dbReference type="InterPro" id="IPR005899">
    <property type="entry name" value="Na_pump_deCOase"/>
</dbReference>
<dbReference type="InterPro" id="IPR023424">
    <property type="entry name" value="OadG"/>
</dbReference>
<dbReference type="NCBIfam" id="TIGR01195">
    <property type="entry name" value="oadG_fam"/>
    <property type="match status" value="1"/>
</dbReference>
<dbReference type="NCBIfam" id="NF002792">
    <property type="entry name" value="PRK02919.1"/>
    <property type="match status" value="1"/>
</dbReference>
<dbReference type="Pfam" id="PF04277">
    <property type="entry name" value="OAD_gamma"/>
    <property type="match status" value="1"/>
</dbReference>